<comment type="catalytic activity">
    <reaction>
        <text>O-phospho-L-seryl-[protein] + H2O = L-seryl-[protein] + phosphate</text>
        <dbReference type="Rhea" id="RHEA:20629"/>
        <dbReference type="Rhea" id="RHEA-COMP:9863"/>
        <dbReference type="Rhea" id="RHEA-COMP:11604"/>
        <dbReference type="ChEBI" id="CHEBI:15377"/>
        <dbReference type="ChEBI" id="CHEBI:29999"/>
        <dbReference type="ChEBI" id="CHEBI:43474"/>
        <dbReference type="ChEBI" id="CHEBI:83421"/>
        <dbReference type="EC" id="3.1.3.16"/>
    </reaction>
</comment>
<comment type="catalytic activity">
    <reaction>
        <text>O-phospho-L-threonyl-[protein] + H2O = L-threonyl-[protein] + phosphate</text>
        <dbReference type="Rhea" id="RHEA:47004"/>
        <dbReference type="Rhea" id="RHEA-COMP:11060"/>
        <dbReference type="Rhea" id="RHEA-COMP:11605"/>
        <dbReference type="ChEBI" id="CHEBI:15377"/>
        <dbReference type="ChEBI" id="CHEBI:30013"/>
        <dbReference type="ChEBI" id="CHEBI:43474"/>
        <dbReference type="ChEBI" id="CHEBI:61977"/>
        <dbReference type="EC" id="3.1.3.16"/>
    </reaction>
</comment>
<comment type="cofactor">
    <cofactor evidence="1 5">
        <name>Mg(2+)</name>
        <dbReference type="ChEBI" id="CHEBI:18420"/>
    </cofactor>
    <cofactor evidence="1 5">
        <name>Mn(2+)</name>
        <dbReference type="ChEBI" id="CHEBI:29035"/>
    </cofactor>
</comment>
<comment type="similarity">
    <text evidence="3">Belongs to the PP2C family.</text>
</comment>
<proteinExistence type="inferred from homology"/>
<keyword id="KW-0378">Hydrolase</keyword>
<keyword id="KW-0460">Magnesium</keyword>
<keyword id="KW-0464">Manganese</keyword>
<keyword id="KW-0479">Metal-binding</keyword>
<keyword id="KW-0904">Protein phosphatase</keyword>
<keyword id="KW-1185">Reference proteome</keyword>
<name>PTC71_DROGR</name>
<gene>
    <name evidence="2" type="primary">fig</name>
    <name type="ORF">GH13984</name>
</gene>
<dbReference type="EC" id="3.1.3.16"/>
<dbReference type="EMBL" id="CH916377">
    <property type="protein sequence ID" value="EDV90793.1"/>
    <property type="molecule type" value="Genomic_DNA"/>
</dbReference>
<dbReference type="SMR" id="B4JYN1"/>
<dbReference type="FunCoup" id="B4JYN1">
    <property type="interactions" value="92"/>
</dbReference>
<dbReference type="STRING" id="7222.B4JYN1"/>
<dbReference type="EnsemblMetazoa" id="FBtr0149398">
    <property type="protein sequence ID" value="FBpp0147890"/>
    <property type="gene ID" value="FBgn0121460"/>
</dbReference>
<dbReference type="EnsemblMetazoa" id="XM_001996099.3">
    <property type="protein sequence ID" value="XP_001996135.1"/>
    <property type="gene ID" value="LOC6569641"/>
</dbReference>
<dbReference type="GeneID" id="6569641"/>
<dbReference type="KEGG" id="dgr:6569641"/>
<dbReference type="CTD" id="43511"/>
<dbReference type="eggNOG" id="KOG1379">
    <property type="taxonomic scope" value="Eukaryota"/>
</dbReference>
<dbReference type="HOGENOM" id="CLU_029404_3_0_1"/>
<dbReference type="InParanoid" id="B4JYN1"/>
<dbReference type="OMA" id="DSWFVSS"/>
<dbReference type="OrthoDB" id="60843at2759"/>
<dbReference type="PhylomeDB" id="B4JYN1"/>
<dbReference type="Proteomes" id="UP000001070">
    <property type="component" value="Unassembled WGS sequence"/>
</dbReference>
<dbReference type="GO" id="GO:0005739">
    <property type="term" value="C:mitochondrion"/>
    <property type="evidence" value="ECO:0007669"/>
    <property type="project" value="TreeGrafter"/>
</dbReference>
<dbReference type="GO" id="GO:0046872">
    <property type="term" value="F:metal ion binding"/>
    <property type="evidence" value="ECO:0007669"/>
    <property type="project" value="UniProtKB-KW"/>
</dbReference>
<dbReference type="GO" id="GO:0004722">
    <property type="term" value="F:protein serine/threonine phosphatase activity"/>
    <property type="evidence" value="ECO:0000250"/>
    <property type="project" value="UniProtKB"/>
</dbReference>
<dbReference type="GO" id="GO:0016311">
    <property type="term" value="P:dephosphorylation"/>
    <property type="evidence" value="ECO:0000250"/>
    <property type="project" value="UniProtKB"/>
</dbReference>
<dbReference type="FunFam" id="3.60.40.10:FF:000009">
    <property type="entry name" value="Blast:Protein phosphatase PTC7 homolog"/>
    <property type="match status" value="1"/>
</dbReference>
<dbReference type="Gene3D" id="3.60.40.10">
    <property type="entry name" value="PPM-type phosphatase domain"/>
    <property type="match status" value="1"/>
</dbReference>
<dbReference type="InterPro" id="IPR036457">
    <property type="entry name" value="PPM-type-like_dom_sf"/>
</dbReference>
<dbReference type="InterPro" id="IPR001932">
    <property type="entry name" value="PPM-type_phosphatase-like_dom"/>
</dbReference>
<dbReference type="InterPro" id="IPR039123">
    <property type="entry name" value="PPTC7"/>
</dbReference>
<dbReference type="PANTHER" id="PTHR12320">
    <property type="entry name" value="PROTEIN PHOSPHATASE 2C"/>
    <property type="match status" value="1"/>
</dbReference>
<dbReference type="PANTHER" id="PTHR12320:SF1">
    <property type="entry name" value="PROTEIN PHOSPHATASE PTC7 HOMOLOG"/>
    <property type="match status" value="1"/>
</dbReference>
<dbReference type="Pfam" id="PF07228">
    <property type="entry name" value="SpoIIE"/>
    <property type="match status" value="1"/>
</dbReference>
<dbReference type="SMART" id="SM00331">
    <property type="entry name" value="PP2C_SIG"/>
    <property type="match status" value="1"/>
</dbReference>
<dbReference type="SMART" id="SM00332">
    <property type="entry name" value="PP2Cc"/>
    <property type="match status" value="1"/>
</dbReference>
<dbReference type="SUPFAM" id="SSF81606">
    <property type="entry name" value="PP2C-like"/>
    <property type="match status" value="1"/>
</dbReference>
<dbReference type="PROSITE" id="PS51746">
    <property type="entry name" value="PPM_2"/>
    <property type="match status" value="1"/>
</dbReference>
<protein>
    <recommendedName>
        <fullName>Protein phosphatase PTC7 homolog fig</fullName>
    </recommendedName>
    <alternativeName>
        <fullName>Fos intronic gene protein</fullName>
        <ecNumber>3.1.3.16</ecNumber>
    </alternativeName>
</protein>
<feature type="chain" id="PRO_0000377397" description="Protein phosphatase PTC7 homolog fig">
    <location>
        <begin position="1"/>
        <end position="307"/>
    </location>
</feature>
<feature type="domain" description="PPM-type phosphatase" evidence="4">
    <location>
        <begin position="41"/>
        <end position="300"/>
    </location>
</feature>
<feature type="binding site" evidence="1">
    <location>
        <position position="77"/>
    </location>
    <ligand>
        <name>Mn(2+)</name>
        <dbReference type="ChEBI" id="CHEBI:29035"/>
        <label>1</label>
    </ligand>
</feature>
<feature type="binding site" evidence="1">
    <location>
        <position position="77"/>
    </location>
    <ligand>
        <name>Mn(2+)</name>
        <dbReference type="ChEBI" id="CHEBI:29035"/>
        <label>2</label>
    </ligand>
</feature>
<feature type="binding site" evidence="1">
    <location>
        <position position="78"/>
    </location>
    <ligand>
        <name>Mn(2+)</name>
        <dbReference type="ChEBI" id="CHEBI:29035"/>
        <label>1</label>
    </ligand>
</feature>
<feature type="binding site" evidence="1">
    <location>
        <position position="222"/>
    </location>
    <ligand>
        <name>Mn(2+)</name>
        <dbReference type="ChEBI" id="CHEBI:29035"/>
        <label>2</label>
    </ligand>
</feature>
<sequence>MFFKVCQLGKGRCCQVLLNYASCQRCQLSSYKGTPRLIKAVQGSSKDQQLAGQVQRFGEDSWFVHSAPKSETMGVADGVGGWRQMGIDSGVFAKQLMTNCSKLSEQADYDGRNPRQLLIDGYHRLKEHATNVWGSSTACLVSLHRSDCTLHSANLGDSGFLVLRHGKVLHRSDEQLHVFNTPYQLSVPPTSQMHKVLSDQPEEAICTQLGLQQGDLVLVATDGLFDNVVESELVQQLQQLHGETRVEKVQLAANRLVDLAKRLSLRTDYQSPFALRAKANNMNYGAGGKPDDITVILASVEVSQRSN</sequence>
<organism>
    <name type="scientific">Drosophila grimshawi</name>
    <name type="common">Hawaiian fruit fly</name>
    <name type="synonym">Idiomyia grimshawi</name>
    <dbReference type="NCBI Taxonomy" id="7222"/>
    <lineage>
        <taxon>Eukaryota</taxon>
        <taxon>Metazoa</taxon>
        <taxon>Ecdysozoa</taxon>
        <taxon>Arthropoda</taxon>
        <taxon>Hexapoda</taxon>
        <taxon>Insecta</taxon>
        <taxon>Pterygota</taxon>
        <taxon>Neoptera</taxon>
        <taxon>Endopterygota</taxon>
        <taxon>Diptera</taxon>
        <taxon>Brachycera</taxon>
        <taxon>Muscomorpha</taxon>
        <taxon>Ephydroidea</taxon>
        <taxon>Drosophilidae</taxon>
        <taxon>Drosophila</taxon>
        <taxon>Hawaiian Drosophila</taxon>
    </lineage>
</organism>
<reference evidence="6" key="1">
    <citation type="journal article" date="2007" name="Nature">
        <title>Evolution of genes and genomes on the Drosophila phylogeny.</title>
        <authorList>
            <consortium name="Drosophila 12 genomes consortium"/>
        </authorList>
    </citation>
    <scope>NUCLEOTIDE SEQUENCE [LARGE SCALE GENOMIC DNA]</scope>
    <source>
        <strain evidence="6">Tucson 15287-2541.00</strain>
    </source>
</reference>
<evidence type="ECO:0000250" key="1">
    <source>
        <dbReference type="UniProtKB" id="P35813"/>
    </source>
</evidence>
<evidence type="ECO:0000250" key="2">
    <source>
        <dbReference type="UniProtKB" id="Q9VAH4"/>
    </source>
</evidence>
<evidence type="ECO:0000255" key="3"/>
<evidence type="ECO:0000255" key="4">
    <source>
        <dbReference type="PROSITE-ProRule" id="PRU01082"/>
    </source>
</evidence>
<evidence type="ECO:0000305" key="5"/>
<evidence type="ECO:0000312" key="6">
    <source>
        <dbReference type="EMBL" id="EDV90793.1"/>
    </source>
</evidence>
<accession>B4JYN1</accession>